<dbReference type="EC" id="4.2.1.93" evidence="1"/>
<dbReference type="EMBL" id="BN001301">
    <property type="protein sequence ID" value="CBF70399.1"/>
    <property type="molecule type" value="Genomic_DNA"/>
</dbReference>
<dbReference type="EMBL" id="AACD01000102">
    <property type="protein sequence ID" value="EAA57743.1"/>
    <property type="molecule type" value="Genomic_DNA"/>
</dbReference>
<dbReference type="RefSeq" id="XP_663598.1">
    <property type="nucleotide sequence ID" value="XM_658506.1"/>
</dbReference>
<dbReference type="SMR" id="Q5B0D6"/>
<dbReference type="FunCoup" id="Q5B0D6">
    <property type="interactions" value="147"/>
</dbReference>
<dbReference type="STRING" id="227321.Q5B0D6"/>
<dbReference type="EnsemblFungi" id="CBF70399">
    <property type="protein sequence ID" value="CBF70399"/>
    <property type="gene ID" value="ANIA_05994"/>
</dbReference>
<dbReference type="KEGG" id="ani:ANIA_05994"/>
<dbReference type="VEuPathDB" id="FungiDB:AN5994"/>
<dbReference type="eggNOG" id="KOG3974">
    <property type="taxonomic scope" value="Eukaryota"/>
</dbReference>
<dbReference type="HOGENOM" id="CLU_030651_0_0_1"/>
<dbReference type="InParanoid" id="Q5B0D6"/>
<dbReference type="OMA" id="WRAAYHN"/>
<dbReference type="OrthoDB" id="8110916at2759"/>
<dbReference type="Proteomes" id="UP000000560">
    <property type="component" value="Chromosome I"/>
</dbReference>
<dbReference type="GO" id="GO:0005737">
    <property type="term" value="C:cytoplasm"/>
    <property type="evidence" value="ECO:0007669"/>
    <property type="project" value="UniProtKB-SubCell"/>
</dbReference>
<dbReference type="GO" id="GO:0005524">
    <property type="term" value="F:ATP binding"/>
    <property type="evidence" value="ECO:0007669"/>
    <property type="project" value="UniProtKB-KW"/>
</dbReference>
<dbReference type="GO" id="GO:0047453">
    <property type="term" value="F:ATP-dependent NAD(P)H-hydrate dehydratase activity"/>
    <property type="evidence" value="ECO:0000318"/>
    <property type="project" value="GO_Central"/>
</dbReference>
<dbReference type="GO" id="GO:0110051">
    <property type="term" value="P:metabolite repair"/>
    <property type="evidence" value="ECO:0000318"/>
    <property type="project" value="GO_Central"/>
</dbReference>
<dbReference type="GO" id="GO:0046496">
    <property type="term" value="P:nicotinamide nucleotide metabolic process"/>
    <property type="evidence" value="ECO:0007669"/>
    <property type="project" value="UniProtKB-UniRule"/>
</dbReference>
<dbReference type="CDD" id="cd01171">
    <property type="entry name" value="YXKO-related"/>
    <property type="match status" value="1"/>
</dbReference>
<dbReference type="FunFam" id="3.40.1190.20:FF:000043">
    <property type="entry name" value="ATP-dependent (S)-NAD(P)H-hydrate dehydratase"/>
    <property type="match status" value="1"/>
</dbReference>
<dbReference type="Gene3D" id="3.40.1190.20">
    <property type="match status" value="1"/>
</dbReference>
<dbReference type="HAMAP" id="MF_01965">
    <property type="entry name" value="NADHX_dehydratase"/>
    <property type="match status" value="1"/>
</dbReference>
<dbReference type="InterPro" id="IPR017953">
    <property type="entry name" value="Carbohydrate_kinase_pred_CS"/>
</dbReference>
<dbReference type="InterPro" id="IPR000631">
    <property type="entry name" value="CARKD"/>
</dbReference>
<dbReference type="InterPro" id="IPR029056">
    <property type="entry name" value="Ribokinase-like"/>
</dbReference>
<dbReference type="NCBIfam" id="TIGR00196">
    <property type="entry name" value="yjeF_cterm"/>
    <property type="match status" value="1"/>
</dbReference>
<dbReference type="PANTHER" id="PTHR12592:SF0">
    <property type="entry name" value="ATP-DEPENDENT (S)-NAD(P)H-HYDRATE DEHYDRATASE"/>
    <property type="match status" value="1"/>
</dbReference>
<dbReference type="PANTHER" id="PTHR12592">
    <property type="entry name" value="ATP-DEPENDENT (S)-NAD(P)H-HYDRATE DEHYDRATASE FAMILY MEMBER"/>
    <property type="match status" value="1"/>
</dbReference>
<dbReference type="Pfam" id="PF01256">
    <property type="entry name" value="Carb_kinase"/>
    <property type="match status" value="1"/>
</dbReference>
<dbReference type="SUPFAM" id="SSF53613">
    <property type="entry name" value="Ribokinase-like"/>
    <property type="match status" value="1"/>
</dbReference>
<dbReference type="PROSITE" id="PS01050">
    <property type="entry name" value="YJEF_C_2"/>
    <property type="match status" value="1"/>
</dbReference>
<dbReference type="PROSITE" id="PS51383">
    <property type="entry name" value="YJEF_C_3"/>
    <property type="match status" value="1"/>
</dbReference>
<feature type="chain" id="PRO_0000416184" description="ATP-dependent (S)-NAD(P)H-hydrate dehydratase">
    <location>
        <begin position="1"/>
        <end position="369"/>
    </location>
</feature>
<feature type="domain" description="YjeF C-terminal" evidence="1">
    <location>
        <begin position="14"/>
        <end position="356"/>
    </location>
</feature>
<feature type="region of interest" description="Disordered" evidence="2">
    <location>
        <begin position="284"/>
        <end position="307"/>
    </location>
</feature>
<feature type="compositionally biased region" description="Basic and acidic residues" evidence="2">
    <location>
        <begin position="284"/>
        <end position="306"/>
    </location>
</feature>
<feature type="binding site" evidence="1">
    <location>
        <position position="126"/>
    </location>
    <ligand>
        <name>(6S)-NADPHX</name>
        <dbReference type="ChEBI" id="CHEBI:64076"/>
    </ligand>
</feature>
<feature type="binding site" evidence="1">
    <location>
        <begin position="179"/>
        <end position="185"/>
    </location>
    <ligand>
        <name>(6S)-NADPHX</name>
        <dbReference type="ChEBI" id="CHEBI:64076"/>
    </ligand>
</feature>
<feature type="binding site" evidence="1">
    <location>
        <begin position="231"/>
        <end position="235"/>
    </location>
    <ligand>
        <name>ATP</name>
        <dbReference type="ChEBI" id="CHEBI:30616"/>
    </ligand>
</feature>
<feature type="binding site" evidence="1">
    <location>
        <begin position="250"/>
        <end position="259"/>
    </location>
    <ligand>
        <name>ATP</name>
        <dbReference type="ChEBI" id="CHEBI:30616"/>
    </ligand>
</feature>
<feature type="binding site" evidence="1">
    <location>
        <position position="260"/>
    </location>
    <ligand>
        <name>(6S)-NADPHX</name>
        <dbReference type="ChEBI" id="CHEBI:64076"/>
    </ligand>
</feature>
<comment type="function">
    <text evidence="1">Catalyzes the dehydration of the S-form of NAD(P)HX at the expense of ATP, which is converted to ADP. Together with NAD(P)HX epimerase, which catalyzes the epimerization of the S- and R-forms, the enzyme allows the repair of both epimers of NAD(P)HX, a damaged form of NAD(P)H that is a result of enzymatic or heat-dependent hydration.</text>
</comment>
<comment type="catalytic activity">
    <reaction evidence="1">
        <text>(6S)-NADHX + ATP = ADP + phosphate + NADH + H(+)</text>
        <dbReference type="Rhea" id="RHEA:19017"/>
        <dbReference type="ChEBI" id="CHEBI:15378"/>
        <dbReference type="ChEBI" id="CHEBI:30616"/>
        <dbReference type="ChEBI" id="CHEBI:43474"/>
        <dbReference type="ChEBI" id="CHEBI:57945"/>
        <dbReference type="ChEBI" id="CHEBI:64074"/>
        <dbReference type="ChEBI" id="CHEBI:456216"/>
        <dbReference type="EC" id="4.2.1.93"/>
    </reaction>
</comment>
<comment type="catalytic activity">
    <reaction>
        <text>(6S)-NADPHX + ATP = ADP + phosphate + NADPH + H(+)</text>
        <dbReference type="Rhea" id="RHEA:32231"/>
        <dbReference type="ChEBI" id="CHEBI:15378"/>
        <dbReference type="ChEBI" id="CHEBI:30616"/>
        <dbReference type="ChEBI" id="CHEBI:43474"/>
        <dbReference type="ChEBI" id="CHEBI:57783"/>
        <dbReference type="ChEBI" id="CHEBI:64076"/>
        <dbReference type="ChEBI" id="CHEBI:456216"/>
        <dbReference type="EC" id="4.2.1.93"/>
    </reaction>
</comment>
<comment type="cofactor">
    <cofactor evidence="1">
        <name>Mg(2+)</name>
        <dbReference type="ChEBI" id="CHEBI:18420"/>
    </cofactor>
</comment>
<comment type="subcellular location">
    <subcellularLocation>
        <location evidence="1">Cytoplasm</location>
    </subcellularLocation>
</comment>
<comment type="similarity">
    <text evidence="1">Belongs to the NnrD/CARKD family.</text>
</comment>
<keyword id="KW-0067">ATP-binding</keyword>
<keyword id="KW-0963">Cytoplasm</keyword>
<keyword id="KW-0456">Lyase</keyword>
<keyword id="KW-0520">NAD</keyword>
<keyword id="KW-0521">NADP</keyword>
<keyword id="KW-0547">Nucleotide-binding</keyword>
<keyword id="KW-0597">Phosphoprotein</keyword>
<keyword id="KW-1185">Reference proteome</keyword>
<sequence length="369" mass="39268">MANVHHISVPSKVLFQKARKLVPPMLEKFHKGQQGRVAVIGGSLDYTGAPYFSAMASARLGCDLSHVICESSAATVIKSYSPNLMVHPILPSSASVKDPSSIDAPSLASPIIAMLGRLHALVIGPGLGRDGVTLKVVTEVMKEARSRSIPFVLDADGLLLVTENPDLVKGYKDCILTPNVNEFSRLAKALNIEVPSLAQISSKESGDKTSKEAEACEKLSQALGGVTIIQKGPHDVISNGVTSIVSDLPGGLKRSGGQGDTLTGSLGTLLAWRAAYHDALWDSGEQEHSKEAENKEEVQGELESNKRMSPSTTLLLAAWAGAAITRECSRRAFKAKGRSMQASDLTDEVHESFLTLIGEPEGSKVPERL</sequence>
<gene>
    <name type="ORF">AN5994</name>
</gene>
<organism>
    <name type="scientific">Emericella nidulans (strain FGSC A4 / ATCC 38163 / CBS 112.46 / NRRL 194 / M139)</name>
    <name type="common">Aspergillus nidulans</name>
    <dbReference type="NCBI Taxonomy" id="227321"/>
    <lineage>
        <taxon>Eukaryota</taxon>
        <taxon>Fungi</taxon>
        <taxon>Dikarya</taxon>
        <taxon>Ascomycota</taxon>
        <taxon>Pezizomycotina</taxon>
        <taxon>Eurotiomycetes</taxon>
        <taxon>Eurotiomycetidae</taxon>
        <taxon>Eurotiales</taxon>
        <taxon>Aspergillaceae</taxon>
        <taxon>Aspergillus</taxon>
        <taxon>Aspergillus subgen. Nidulantes</taxon>
    </lineage>
</organism>
<evidence type="ECO:0000255" key="1">
    <source>
        <dbReference type="HAMAP-Rule" id="MF_03157"/>
    </source>
</evidence>
<evidence type="ECO:0000256" key="2">
    <source>
        <dbReference type="SAM" id="MobiDB-lite"/>
    </source>
</evidence>
<protein>
    <recommendedName>
        <fullName evidence="1">ATP-dependent (S)-NAD(P)H-hydrate dehydratase</fullName>
        <ecNumber evidence="1">4.2.1.93</ecNumber>
    </recommendedName>
    <alternativeName>
        <fullName evidence="1">ATP-dependent NAD(P)HX dehydratase</fullName>
    </alternativeName>
</protein>
<accession>Q5B0D6</accession>
<accession>C8V3A0</accession>
<proteinExistence type="inferred from homology"/>
<reference key="1">
    <citation type="journal article" date="2005" name="Nature">
        <title>Sequencing of Aspergillus nidulans and comparative analysis with A. fumigatus and A. oryzae.</title>
        <authorList>
            <person name="Galagan J.E."/>
            <person name="Calvo S.E."/>
            <person name="Cuomo C."/>
            <person name="Ma L.-J."/>
            <person name="Wortman J.R."/>
            <person name="Batzoglou S."/>
            <person name="Lee S.-I."/>
            <person name="Bastuerkmen M."/>
            <person name="Spevak C.C."/>
            <person name="Clutterbuck J."/>
            <person name="Kapitonov V."/>
            <person name="Jurka J."/>
            <person name="Scazzocchio C."/>
            <person name="Farman M.L."/>
            <person name="Butler J."/>
            <person name="Purcell S."/>
            <person name="Harris S."/>
            <person name="Braus G.H."/>
            <person name="Draht O."/>
            <person name="Busch S."/>
            <person name="D'Enfert C."/>
            <person name="Bouchier C."/>
            <person name="Goldman G.H."/>
            <person name="Bell-Pedersen D."/>
            <person name="Griffiths-Jones S."/>
            <person name="Doonan J.H."/>
            <person name="Yu J."/>
            <person name="Vienken K."/>
            <person name="Pain A."/>
            <person name="Freitag M."/>
            <person name="Selker E.U."/>
            <person name="Archer D.B."/>
            <person name="Penalva M.A."/>
            <person name="Oakley B.R."/>
            <person name="Momany M."/>
            <person name="Tanaka T."/>
            <person name="Kumagai T."/>
            <person name="Asai K."/>
            <person name="Machida M."/>
            <person name="Nierman W.C."/>
            <person name="Denning D.W."/>
            <person name="Caddick M.X."/>
            <person name="Hynes M."/>
            <person name="Paoletti M."/>
            <person name="Fischer R."/>
            <person name="Miller B.L."/>
            <person name="Dyer P.S."/>
            <person name="Sachs M.S."/>
            <person name="Osmani S.A."/>
            <person name="Birren B.W."/>
        </authorList>
    </citation>
    <scope>NUCLEOTIDE SEQUENCE [LARGE SCALE GENOMIC DNA]</scope>
    <source>
        <strain>FGSC A4 / ATCC 38163 / CBS 112.46 / NRRL 194 / M139</strain>
    </source>
</reference>
<reference key="2">
    <citation type="journal article" date="2009" name="Fungal Genet. Biol.">
        <title>The 2008 update of the Aspergillus nidulans genome annotation: a community effort.</title>
        <authorList>
            <person name="Wortman J.R."/>
            <person name="Gilsenan J.M."/>
            <person name="Joardar V."/>
            <person name="Deegan J."/>
            <person name="Clutterbuck J."/>
            <person name="Andersen M.R."/>
            <person name="Archer D."/>
            <person name="Bencina M."/>
            <person name="Braus G."/>
            <person name="Coutinho P."/>
            <person name="von Dohren H."/>
            <person name="Doonan J."/>
            <person name="Driessen A.J."/>
            <person name="Durek P."/>
            <person name="Espeso E."/>
            <person name="Fekete E."/>
            <person name="Flipphi M."/>
            <person name="Estrada C.G."/>
            <person name="Geysens S."/>
            <person name="Goldman G."/>
            <person name="de Groot P.W."/>
            <person name="Hansen K."/>
            <person name="Harris S.D."/>
            <person name="Heinekamp T."/>
            <person name="Helmstaedt K."/>
            <person name="Henrissat B."/>
            <person name="Hofmann G."/>
            <person name="Homan T."/>
            <person name="Horio T."/>
            <person name="Horiuchi H."/>
            <person name="James S."/>
            <person name="Jones M."/>
            <person name="Karaffa L."/>
            <person name="Karanyi Z."/>
            <person name="Kato M."/>
            <person name="Keller N."/>
            <person name="Kelly D.E."/>
            <person name="Kiel J.A."/>
            <person name="Kim J.M."/>
            <person name="van der Klei I.J."/>
            <person name="Klis F.M."/>
            <person name="Kovalchuk A."/>
            <person name="Krasevec N."/>
            <person name="Kubicek C.P."/>
            <person name="Liu B."/>
            <person name="Maccabe A."/>
            <person name="Meyer V."/>
            <person name="Mirabito P."/>
            <person name="Miskei M."/>
            <person name="Mos M."/>
            <person name="Mullins J."/>
            <person name="Nelson D.R."/>
            <person name="Nielsen J."/>
            <person name="Oakley B.R."/>
            <person name="Osmani S.A."/>
            <person name="Pakula T."/>
            <person name="Paszewski A."/>
            <person name="Paulsen I."/>
            <person name="Pilsyk S."/>
            <person name="Pocsi I."/>
            <person name="Punt P.J."/>
            <person name="Ram A.F."/>
            <person name="Ren Q."/>
            <person name="Robellet X."/>
            <person name="Robson G."/>
            <person name="Seiboth B."/>
            <person name="van Solingen P."/>
            <person name="Specht T."/>
            <person name="Sun J."/>
            <person name="Taheri-Talesh N."/>
            <person name="Takeshita N."/>
            <person name="Ussery D."/>
            <person name="vanKuyk P.A."/>
            <person name="Visser H."/>
            <person name="van de Vondervoort P.J."/>
            <person name="de Vries R.P."/>
            <person name="Walton J."/>
            <person name="Xiang X."/>
            <person name="Xiong Y."/>
            <person name="Zeng A.P."/>
            <person name="Brandt B.W."/>
            <person name="Cornell M.J."/>
            <person name="van den Hondel C.A."/>
            <person name="Visser J."/>
            <person name="Oliver S.G."/>
            <person name="Turner G."/>
        </authorList>
    </citation>
    <scope>GENOME REANNOTATION</scope>
    <source>
        <strain>FGSC A4 / ATCC 38163 / CBS 112.46 / NRRL 194 / M139</strain>
    </source>
</reference>
<name>NNRD_EMENI</name>